<accession>Q8EEA3</accession>
<gene>
    <name type="ordered locus">SO_2484</name>
</gene>
<reference key="1">
    <citation type="journal article" date="2002" name="Nat. Biotechnol.">
        <title>Genome sequence of the dissimilatory metal ion-reducing bacterium Shewanella oneidensis.</title>
        <authorList>
            <person name="Heidelberg J.F."/>
            <person name="Paulsen I.T."/>
            <person name="Nelson K.E."/>
            <person name="Gaidos E.J."/>
            <person name="Nelson W.C."/>
            <person name="Read T.D."/>
            <person name="Eisen J.A."/>
            <person name="Seshadri R."/>
            <person name="Ward N.L."/>
            <person name="Methe B.A."/>
            <person name="Clayton R.A."/>
            <person name="Meyer T."/>
            <person name="Tsapin A."/>
            <person name="Scott J."/>
            <person name="Beanan M.J."/>
            <person name="Brinkac L.M."/>
            <person name="Daugherty S.C."/>
            <person name="DeBoy R.T."/>
            <person name="Dodson R.J."/>
            <person name="Durkin A.S."/>
            <person name="Haft D.H."/>
            <person name="Kolonay J.F."/>
            <person name="Madupu R."/>
            <person name="Peterson J.D."/>
            <person name="Umayam L.A."/>
            <person name="White O."/>
            <person name="Wolf A.M."/>
            <person name="Vamathevan J.J."/>
            <person name="Weidman J.F."/>
            <person name="Impraim M."/>
            <person name="Lee K."/>
            <person name="Berry K.J."/>
            <person name="Lee C."/>
            <person name="Mueller J."/>
            <person name="Khouri H.M."/>
            <person name="Gill J."/>
            <person name="Utterback T.R."/>
            <person name="McDonald L.A."/>
            <person name="Feldblyum T.V."/>
            <person name="Smith H.O."/>
            <person name="Venter J.C."/>
            <person name="Nealson K.H."/>
            <person name="Fraser C.M."/>
        </authorList>
    </citation>
    <scope>NUCLEOTIDE SEQUENCE [LARGE SCALE GENOMIC DNA]</scope>
    <source>
        <strain>ATCC 700550 / JCM 31522 / CIP 106686 / LMG 19005 / NCIMB 14063 / MR-1</strain>
    </source>
</reference>
<keyword id="KW-0963">Cytoplasm</keyword>
<keyword id="KW-0378">Hydrolase</keyword>
<keyword id="KW-0479">Metal-binding</keyword>
<keyword id="KW-0547">Nucleotide-binding</keyword>
<keyword id="KW-1185">Reference proteome</keyword>
<feature type="chain" id="PRO_0000095059" description="5'-deoxynucleotidase SO_2484">
    <location>
        <begin position="1"/>
        <end position="195"/>
    </location>
</feature>
<feature type="domain" description="HD" evidence="2">
    <location>
        <begin position="28"/>
        <end position="140"/>
    </location>
</feature>
<feature type="binding site" evidence="1">
    <location>
        <begin position="16"/>
        <end position="17"/>
    </location>
    <ligand>
        <name>substrate</name>
    </ligand>
</feature>
<feature type="binding site" evidence="1">
    <location>
        <position position="31"/>
    </location>
    <ligand>
        <name>a divalent metal cation</name>
        <dbReference type="ChEBI" id="CHEBI:60240"/>
    </ligand>
</feature>
<feature type="binding site" evidence="1">
    <location>
        <position position="31"/>
    </location>
    <ligand>
        <name>substrate</name>
    </ligand>
</feature>
<feature type="binding site" evidence="1">
    <location>
        <position position="66"/>
    </location>
    <ligand>
        <name>a divalent metal cation</name>
        <dbReference type="ChEBI" id="CHEBI:60240"/>
    </ligand>
</feature>
<feature type="binding site" evidence="1">
    <location>
        <position position="67"/>
    </location>
    <ligand>
        <name>a divalent metal cation</name>
        <dbReference type="ChEBI" id="CHEBI:60240"/>
    </ligand>
</feature>
<feature type="binding site" evidence="1">
    <location>
        <position position="67"/>
    </location>
    <ligand>
        <name>substrate</name>
    </ligand>
</feature>
<feature type="binding site" evidence="1">
    <location>
        <begin position="75"/>
        <end position="78"/>
    </location>
    <ligand>
        <name>substrate</name>
    </ligand>
</feature>
<feature type="binding site" evidence="1">
    <location>
        <position position="135"/>
    </location>
    <ligand>
        <name>a divalent metal cation</name>
        <dbReference type="ChEBI" id="CHEBI:60240"/>
    </ligand>
</feature>
<feature type="binding site" evidence="1">
    <location>
        <position position="135"/>
    </location>
    <ligand>
        <name>substrate</name>
    </ligand>
</feature>
<feature type="site" description="Appears to be important in orienting the phosphate for catalysis" evidence="1">
    <location>
        <position position="16"/>
    </location>
</feature>
<protein>
    <recommendedName>
        <fullName evidence="1">5'-deoxynucleotidase SO_2484</fullName>
        <ecNumber evidence="1">3.1.3.89</ecNumber>
    </recommendedName>
    <alternativeName>
        <fullName evidence="1">5'-deoxyribonucleotidase</fullName>
    </alternativeName>
    <alternativeName>
        <fullName evidence="1">Nucleoside 5'-monophosphate phosphohydrolase</fullName>
    </alternativeName>
</protein>
<dbReference type="EC" id="3.1.3.89" evidence="1"/>
<dbReference type="EMBL" id="AE014299">
    <property type="protein sequence ID" value="AAN55515.1"/>
    <property type="molecule type" value="Genomic_DNA"/>
</dbReference>
<dbReference type="RefSeq" id="NP_718071.1">
    <property type="nucleotide sequence ID" value="NC_004347.2"/>
</dbReference>
<dbReference type="SMR" id="Q8EEA3"/>
<dbReference type="STRING" id="211586.SO_2484"/>
<dbReference type="PaxDb" id="211586-SO_2484"/>
<dbReference type="KEGG" id="son:SO_2484"/>
<dbReference type="PATRIC" id="fig|211586.12.peg.2392"/>
<dbReference type="eggNOG" id="COG1896">
    <property type="taxonomic scope" value="Bacteria"/>
</dbReference>
<dbReference type="HOGENOM" id="CLU_084784_0_0_6"/>
<dbReference type="OrthoDB" id="9812744at2"/>
<dbReference type="PhylomeDB" id="Q8EEA3"/>
<dbReference type="BioCyc" id="SONE211586:G1GMP-2269-MONOMER"/>
<dbReference type="Proteomes" id="UP000008186">
    <property type="component" value="Chromosome"/>
</dbReference>
<dbReference type="GO" id="GO:0005737">
    <property type="term" value="C:cytoplasm"/>
    <property type="evidence" value="ECO:0007669"/>
    <property type="project" value="UniProtKB-SubCell"/>
</dbReference>
<dbReference type="GO" id="GO:0002953">
    <property type="term" value="F:5'-deoxynucleotidase activity"/>
    <property type="evidence" value="ECO:0000318"/>
    <property type="project" value="GO_Central"/>
</dbReference>
<dbReference type="GO" id="GO:0046872">
    <property type="term" value="F:metal ion binding"/>
    <property type="evidence" value="ECO:0007669"/>
    <property type="project" value="UniProtKB-KW"/>
</dbReference>
<dbReference type="GO" id="GO:0000166">
    <property type="term" value="F:nucleotide binding"/>
    <property type="evidence" value="ECO:0007669"/>
    <property type="project" value="UniProtKB-KW"/>
</dbReference>
<dbReference type="FunFam" id="1.10.3210.10:FF:000002">
    <property type="entry name" value="Nucleotidase YfbR"/>
    <property type="match status" value="1"/>
</dbReference>
<dbReference type="Gene3D" id="1.10.3210.10">
    <property type="entry name" value="Hypothetical protein af1432"/>
    <property type="match status" value="1"/>
</dbReference>
<dbReference type="HAMAP" id="MF_01100">
    <property type="entry name" value="5DNU"/>
    <property type="match status" value="1"/>
</dbReference>
<dbReference type="InterPro" id="IPR006674">
    <property type="entry name" value="HD_domain"/>
</dbReference>
<dbReference type="InterPro" id="IPR022971">
    <property type="entry name" value="YfbR"/>
</dbReference>
<dbReference type="InterPro" id="IPR039356">
    <property type="entry name" value="YfbR/HDDC2"/>
</dbReference>
<dbReference type="NCBIfam" id="NF003009">
    <property type="entry name" value="PRK03826.1"/>
    <property type="match status" value="1"/>
</dbReference>
<dbReference type="PANTHER" id="PTHR11845">
    <property type="entry name" value="5'-DEOXYNUCLEOTIDASE HDDC2"/>
    <property type="match status" value="1"/>
</dbReference>
<dbReference type="PANTHER" id="PTHR11845:SF13">
    <property type="entry name" value="5'-DEOXYNUCLEOTIDASE HDDC2"/>
    <property type="match status" value="1"/>
</dbReference>
<dbReference type="Pfam" id="PF12917">
    <property type="entry name" value="YfbR-like"/>
    <property type="match status" value="1"/>
</dbReference>
<dbReference type="SUPFAM" id="SSF109604">
    <property type="entry name" value="HD-domain/PDEase-like"/>
    <property type="match status" value="1"/>
</dbReference>
<dbReference type="PROSITE" id="PS51831">
    <property type="entry name" value="HD"/>
    <property type="match status" value="1"/>
</dbReference>
<sequence length="195" mass="22446">MSHLFAHLARMKLIQRWPLMYNVRTENVQEHSLQVAMVAHALVIISNRKFGTTLDAHQATSLAIFHDASEILTGDLPTPVKYFNKEIEAEYKKIEAIAEQRMLDMVPDEFKEDYRSLFISDYADPTYKAIVKSADTLCAYLKCLEENRAGNTEFNTARKRLEAMLESNPNPAVKYFMDCFVPSFTLNLDEINKML</sequence>
<evidence type="ECO:0000255" key="1">
    <source>
        <dbReference type="HAMAP-Rule" id="MF_01100"/>
    </source>
</evidence>
<evidence type="ECO:0000255" key="2">
    <source>
        <dbReference type="PROSITE-ProRule" id="PRU01175"/>
    </source>
</evidence>
<comment type="function">
    <text evidence="1">Catalyzes the strictly specific dephosphorylation of 2'-deoxyribonucleoside 5'-monophosphates.</text>
</comment>
<comment type="catalytic activity">
    <reaction evidence="1">
        <text>a 2'-deoxyribonucleoside 5'-phosphate + H2O = a 2'-deoxyribonucleoside + phosphate</text>
        <dbReference type="Rhea" id="RHEA:36167"/>
        <dbReference type="ChEBI" id="CHEBI:15377"/>
        <dbReference type="ChEBI" id="CHEBI:18274"/>
        <dbReference type="ChEBI" id="CHEBI:43474"/>
        <dbReference type="ChEBI" id="CHEBI:65317"/>
        <dbReference type="EC" id="3.1.3.89"/>
    </reaction>
</comment>
<comment type="cofactor">
    <cofactor evidence="1">
        <name>a divalent metal cation</name>
        <dbReference type="ChEBI" id="CHEBI:60240"/>
    </cofactor>
</comment>
<comment type="subunit">
    <text evidence="1">Homodimer.</text>
</comment>
<comment type="subcellular location">
    <subcellularLocation>
        <location evidence="1">Cytoplasm</location>
    </subcellularLocation>
</comment>
<comment type="similarity">
    <text evidence="1">Belongs to the 5DNU family.</text>
</comment>
<name>5DNU_SHEON</name>
<proteinExistence type="inferred from homology"/>
<organism>
    <name type="scientific">Shewanella oneidensis (strain ATCC 700550 / JCM 31522 / CIP 106686 / LMG 19005 / NCIMB 14063 / MR-1)</name>
    <dbReference type="NCBI Taxonomy" id="211586"/>
    <lineage>
        <taxon>Bacteria</taxon>
        <taxon>Pseudomonadati</taxon>
        <taxon>Pseudomonadota</taxon>
        <taxon>Gammaproteobacteria</taxon>
        <taxon>Alteromonadales</taxon>
        <taxon>Shewanellaceae</taxon>
        <taxon>Shewanella</taxon>
    </lineage>
</organism>